<organism>
    <name type="scientific">Cordyceps militaris (strain CM01)</name>
    <name type="common">Caterpillar fungus</name>
    <dbReference type="NCBI Taxonomy" id="983644"/>
    <lineage>
        <taxon>Eukaryota</taxon>
        <taxon>Fungi</taxon>
        <taxon>Dikarya</taxon>
        <taxon>Ascomycota</taxon>
        <taxon>Pezizomycotina</taxon>
        <taxon>Sordariomycetes</taxon>
        <taxon>Hypocreomycetidae</taxon>
        <taxon>Hypocreales</taxon>
        <taxon>Cordycipitaceae</taxon>
        <taxon>Cordyceps</taxon>
    </lineage>
</organism>
<evidence type="ECO:0000255" key="1">
    <source>
        <dbReference type="PROSITE-ProRule" id="PRU01175"/>
    </source>
</evidence>
<evidence type="ECO:0000269" key="2">
    <source>
    </source>
</evidence>
<evidence type="ECO:0000269" key="3">
    <source>
    </source>
</evidence>
<evidence type="ECO:0000269" key="4">
    <source>
    </source>
</evidence>
<evidence type="ECO:0000269" key="5">
    <source>
    </source>
</evidence>
<evidence type="ECO:0000269" key="6">
    <source>
    </source>
</evidence>
<evidence type="ECO:0000269" key="7">
    <source>
    </source>
</evidence>
<evidence type="ECO:0000269" key="8">
    <source>
    </source>
</evidence>
<evidence type="ECO:0000269" key="9">
    <source>
    </source>
</evidence>
<evidence type="ECO:0000269" key="10">
    <source>
    </source>
</evidence>
<evidence type="ECO:0000269" key="11">
    <source>
    </source>
</evidence>
<evidence type="ECO:0000269" key="12">
    <source>
    </source>
</evidence>
<evidence type="ECO:0000303" key="13">
    <source>
    </source>
</evidence>
<gene>
    <name evidence="13" type="primary">cns2</name>
    <name type="ORF">CCM_04437</name>
</gene>
<accession>G3JF09</accession>
<feature type="chain" id="PRO_0000460181" description="Metal-dependent phosphohydrolase cns2">
    <location>
        <begin position="1"/>
        <end position="345"/>
    </location>
</feature>
<feature type="domain" description="HD" evidence="1">
    <location>
        <begin position="70"/>
        <end position="171"/>
    </location>
</feature>
<proteinExistence type="evidence at protein level"/>
<name>CNS2_CORMM</name>
<comment type="function">
    <text evidence="2 9">Metal-dependent phosphohydrolase; part of the gene cluster that mediates the biosynthesis of cordycepin (COR) and pentostatin (PTN), two adenosine analogs with related bioactivity profiles as both mimic adenosine and can inhibit some of the processes that are adenosine dependent (PubMed:29056419, PubMed:37987892). Within the pathway, cns2 catalyzes dephosphorylation of 3'-AMP to produce 2'-carbonyl-3'-deoxyadenosine (2'-C-3'-dA) (PubMed:29056419). The first step of cordycepin biosynthesis involves hydroxyl phosphorylation of the 3'-OH position on adenosine to produce adenosine-3'-monophosphate (3'-AMP), catalyzed by kinase activity of cns3. Next, 3'-AMP is dephosphorylated to 2'-carbonyl-3'-deoxyadenosine by cns2, which is finally converted to cordycepin (3'-deoxyadenosine) by the oxidoreductase cns1 (PubMed:29056419).</text>
</comment>
<comment type="pathway">
    <text evidence="13">Secondary metabolite biosynthesis.</text>
</comment>
<comment type="subunit">
    <text evidence="2">Interacts with cns1.</text>
</comment>
<comment type="subcellular location">
    <subcellularLocation>
        <location evidence="2">Lipid droplet</location>
    </subcellularLocation>
</comment>
<comment type="induction">
    <text evidence="7 10 11">Expression strongly increases by addition of L-alanine that activates cordycepin production, as well as during the development of fruiting bodies (PubMed:32390960, PubMed:38790255). Expression is positively regulated by the two key transcription factors Kruppel-like factor 4 (Klf4) and retinoid X receptor alpha (Rxra) (PubMed:39171629).</text>
</comment>
<comment type="disruption phenotype">
    <text evidence="2">Impairs the production of cordycepin.</text>
</comment>
<comment type="biotechnology">
    <text evidence="3 4 5 6 8 12">Cordycepin has antitumor, antibacterial, antifungal, antivirus, and immune regulation properties; thus, cordycepin has important value in commerce, medicine, and scientific research.</text>
</comment>
<comment type="miscellaneous">
    <text evidence="2">Cordycepin and pentostatin biosynthesis coupling is an important point of metabolic regulation where pentostatin safeguards cordycepin from deamination by inhibiting adenosine deaminase (ADA) activity. ADA is not inhibited until cordycepin reaches self-toxic levels, at which point ADA derepression occurs allowing for detoxification of cordycepin to 3'-deoxyinosine.</text>
</comment>
<keyword id="KW-0378">Hydrolase</keyword>
<keyword id="KW-0551">Lipid droplet</keyword>
<keyword id="KW-1185">Reference proteome</keyword>
<sequence>MSCPTSAGVLQTHQLLNDNSILIRDEIYGEELVSEPVLVELLQSAEVQRLQGICQHGVTGFLGITPRVTRLEHSVGAFILVRRVGAALDEQVAALLHDISHTTLSHVIDHALSKPGEGSYHEVHKARYLKTTRLPDIVAKHGISQKVFEEELFPLVEMPSPQLCADRLDYALRDAVSFGKLAMEDAQKVVSSLRAFPSATTARRLLVLDDAEVALTLSRAYTTTDKDVWSNPAHIDMYERTGRVIGELVEAGSVEDKVLWQVSDAEFWTMLRQAANPEQRRAIERLETEGVPEDDGLELPHCAKIRTLDPDVWPRGEKQPAPLSIVLPTWGTERQQYILSRTQHR</sequence>
<reference key="1">
    <citation type="journal article" date="2011" name="Genome Biol.">
        <title>Genome sequence of the insect pathogenic fungus Cordyceps militaris, a valued traditional Chinese medicine.</title>
        <authorList>
            <person name="Zheng P."/>
            <person name="Xia Y."/>
            <person name="Xiao G."/>
            <person name="Xiong C."/>
            <person name="Hu X."/>
            <person name="Zhang S."/>
            <person name="Zheng H."/>
            <person name="Huang Y."/>
            <person name="Zhou Y."/>
            <person name="Wang S."/>
            <person name="Zhao G.-P."/>
            <person name="Liu X."/>
            <person name="St Leger R.J."/>
            <person name="Wang C."/>
        </authorList>
    </citation>
    <scope>NUCLEOTIDE SEQUENCE [LARGE SCALE GENOMIC DNA]</scope>
    <source>
        <strain>CM01</strain>
    </source>
</reference>
<reference key="2">
    <citation type="journal article" date="1998" name="Antimicrob. Agents Chemother.">
        <title>Antifungal activity of 3'-deoxyadenosine (cordycepin).</title>
        <authorList>
            <person name="Sugar A.M."/>
            <person name="McCaffrey R.P."/>
        </authorList>
    </citation>
    <scope>BIOTECHNOLOGY</scope>
</reference>
<reference key="3">
    <citation type="journal article" date="2017" name="Cell Chem. Biol.">
        <title>Fungal Cordycepin Biosynthesis Is Coupled with the Production of the Safeguard Molecule Pentostatin.</title>
        <authorList>
            <person name="Xia Y."/>
            <person name="Luo F."/>
            <person name="Shang Y."/>
            <person name="Chen P."/>
            <person name="Lu Y."/>
            <person name="Wang C."/>
        </authorList>
    </citation>
    <scope>FUNCTION</scope>
    <scope>CATALYTIC ACTIVITY</scope>
    <scope>DISRUPTION PHENOTYPE</scope>
    <scope>SUBCELLULAR LOCATION</scope>
    <scope>INTERACTION WITH CNS1</scope>
</reference>
<reference key="4">
    <citation type="journal article" date="2018" name="Cell. Death. Discov.">
        <title>Cordycepin induces apoptosis of human ovarian cancer cells by inhibiting CCL5-mediated Akt/NF-kappaB signaling pathway.</title>
        <authorList>
            <person name="Cui Z.Y."/>
            <person name="Park S.J."/>
            <person name="Jo E."/>
            <person name="Hwang I.H."/>
            <person name="Lee K.B."/>
            <person name="Kim S.W."/>
            <person name="Kim D.J."/>
            <person name="Joo J.C."/>
            <person name="Hong S.H."/>
            <person name="Lee M.G."/>
            <person name="Jang I.S."/>
        </authorList>
    </citation>
    <scope>BIOTECHNOLOGY</scope>
</reference>
<reference key="5">
    <citation type="journal article" date="2019" name="J. Cancer">
        <title>Cordycepin Induces Apoptosis and G2/M Phase Arrest through the ERK Pathways in Esophageal Cancer Cells.</title>
        <authorList>
            <person name="Xu J.C."/>
            <person name="Zhou X.P."/>
            <person name="Wang X.A."/>
            <person name="Xu M.D."/>
            <person name="Chen T."/>
            <person name="Chen T.Y."/>
            <person name="Zhou P.H."/>
            <person name="Zhang Y.Q."/>
        </authorList>
    </citation>
    <scope>BIOTECHNOLOGY</scope>
</reference>
<reference key="6">
    <citation type="journal article" date="2019" name="J. Microbiol.">
        <title>Antimicrobial effect and proposed action mechanism of cordycepin against Escherichia coli and Bacillus subtilis.</title>
        <authorList>
            <person name="Jiang Q."/>
            <person name="Lou Z."/>
            <person name="Wang H."/>
            <person name="Chen C."/>
        </authorList>
    </citation>
    <scope>BIOTECHNOLOGY</scope>
</reference>
<reference key="7">
    <citation type="journal article" date="2020" name="Front. Microbiol.">
        <title>Transcriptome Analysis Reveals the Flexibility of Cordycepin Network in Cordyceps militaris Activated by L-Alanine Addition.</title>
        <authorList>
            <person name="Chen B.X."/>
            <person name="Wei T."/>
            <person name="Xue L.N."/>
            <person name="Zheng Q.W."/>
            <person name="Ye Z.W."/>
            <person name="Zou Y."/>
            <person name="Yang Y."/>
            <person name="Yun F."/>
            <person name="Guo L.Q."/>
            <person name="Lin J.F."/>
        </authorList>
    </citation>
    <scope>INDUCTION</scope>
</reference>
<reference key="8">
    <citation type="journal article" date="2020" name="Immunopharmacol. Immunotoxicol.">
        <title>Cordycepin exhibits a suppressive effect on T cells through inhibiting TCR signaling cascade in CFA-induced inflammation mice model.</title>
        <authorList>
            <person name="Wang X."/>
            <person name="Xi D."/>
            <person name="Mo J."/>
            <person name="Wang K."/>
            <person name="Luo Y."/>
            <person name="Xia E."/>
            <person name="Huang R."/>
            <person name="Luo S."/>
            <person name="Wei J."/>
            <person name="Ren Z."/>
            <person name="Pang H."/>
            <person name="Yang R."/>
        </authorList>
    </citation>
    <scope>BIOTECHNOLOGY</scope>
</reference>
<reference key="9">
    <citation type="journal article" date="2022" name="J. Biomol. Struct. Dyn.">
        <title>Cordycepin: a bioactive metabolite of Cordyceps militaris and polyadenylation inhibitor with therapeutic potential against COVID-19.</title>
        <authorList>
            <person name="Verma A.K."/>
        </authorList>
    </citation>
    <scope>BIOTECHNOLOGY</scope>
</reference>
<reference key="10">
    <citation type="journal article" date="2023" name="Int. Microbiol.">
        <title>A novel complementary pathway of cordycepin biosynthesis in Cordyceps militaris.</title>
        <authorList>
            <person name="Zhang H."/>
            <person name="Yang J."/>
            <person name="Luo S."/>
            <person name="Liu L."/>
            <person name="Yang G."/>
            <person name="Gao B."/>
            <person name="Fan H."/>
            <person name="Deng L."/>
            <person name="Yang M."/>
        </authorList>
    </citation>
    <scope>FUNCTION</scope>
</reference>
<reference key="11">
    <citation type="journal article" date="2024" name="Genes (Basel)">
        <title>Genomic and Transcriptome Analysis Reveals the Biosynthesis Network of Cordycepin in Cordyceps militaris.</title>
        <authorList>
            <person name="Chai L."/>
            <person name="Li J."/>
            <person name="Guo L."/>
            <person name="Zhang S."/>
            <person name="Chen F."/>
            <person name="Zhu W."/>
            <person name="Li Y."/>
        </authorList>
    </citation>
    <scope>INDUCTION</scope>
</reference>
<reference key="12">
    <citation type="journal article" date="2024" name="Int. J. Med. Mushrooms">
        <title>Evidence for Regulation of Cordycepin Biosynthesis by Transcription Factors Krueppel-Like Factor 4 and Retinoid X Receptor Alpha in Caterpillar Medicinal Mushroom Cordyceps militaris (Ascomycetes).</title>
        <authorList>
            <person name="Zhang H."/>
            <person name="Deng L."/>
            <person name="Luo S."/>
            <person name="Liu L."/>
            <person name="Yang G."/>
            <person name="Zhang Y."/>
            <person name="Gao B."/>
            <person name="Yang D."/>
            <person name="Wang X."/>
            <person name="Li S."/>
            <person name="Li X."/>
            <person name="Jiang Y."/>
            <person name="Lao W."/>
            <person name="Vriesekoop F."/>
        </authorList>
    </citation>
    <scope>INDUCTION</scope>
</reference>
<dbReference type="EC" id="3.1.3.-" evidence="2"/>
<dbReference type="EMBL" id="JH126401">
    <property type="protein sequence ID" value="EGX93065.1"/>
    <property type="molecule type" value="Genomic_DNA"/>
</dbReference>
<dbReference type="RefSeq" id="XP_006669648.1">
    <property type="nucleotide sequence ID" value="XM_006669585.1"/>
</dbReference>
<dbReference type="SMR" id="G3JF09"/>
<dbReference type="STRING" id="983644.G3JF09"/>
<dbReference type="GeneID" id="18166460"/>
<dbReference type="KEGG" id="cmt:CCM_04437"/>
<dbReference type="VEuPathDB" id="FungiDB:CCM_04437"/>
<dbReference type="eggNOG" id="ENOG502RY2F">
    <property type="taxonomic scope" value="Eukaryota"/>
</dbReference>
<dbReference type="HOGENOM" id="CLU_056050_0_0_1"/>
<dbReference type="InParanoid" id="G3JF09"/>
<dbReference type="OMA" id="FQTHESP"/>
<dbReference type="OrthoDB" id="9991235at2759"/>
<dbReference type="BRENDA" id="6.3.2.6">
    <property type="organism ID" value="1615"/>
</dbReference>
<dbReference type="Proteomes" id="UP000001610">
    <property type="component" value="Unassembled WGS sequence"/>
</dbReference>
<dbReference type="GO" id="GO:0005811">
    <property type="term" value="C:lipid droplet"/>
    <property type="evidence" value="ECO:0007669"/>
    <property type="project" value="UniProtKB-SubCell"/>
</dbReference>
<dbReference type="GO" id="GO:0005634">
    <property type="term" value="C:nucleus"/>
    <property type="evidence" value="ECO:0007669"/>
    <property type="project" value="TreeGrafter"/>
</dbReference>
<dbReference type="GO" id="GO:0008832">
    <property type="term" value="F:dGTPase activity"/>
    <property type="evidence" value="ECO:0007669"/>
    <property type="project" value="TreeGrafter"/>
</dbReference>
<dbReference type="GO" id="GO:0006203">
    <property type="term" value="P:dGTP catabolic process"/>
    <property type="evidence" value="ECO:0007669"/>
    <property type="project" value="TreeGrafter"/>
</dbReference>
<dbReference type="CDD" id="cd00077">
    <property type="entry name" value="HDc"/>
    <property type="match status" value="1"/>
</dbReference>
<dbReference type="FunFam" id="1.10.3210.10:FF:000026">
    <property type="entry name" value="Metal-dependent phosphohydrolase"/>
    <property type="match status" value="1"/>
</dbReference>
<dbReference type="Gene3D" id="1.10.3210.10">
    <property type="entry name" value="Hypothetical protein af1432"/>
    <property type="match status" value="1"/>
</dbReference>
<dbReference type="InterPro" id="IPR050135">
    <property type="entry name" value="dGTPase-like"/>
</dbReference>
<dbReference type="InterPro" id="IPR003607">
    <property type="entry name" value="HD/PDEase_dom"/>
</dbReference>
<dbReference type="InterPro" id="IPR006674">
    <property type="entry name" value="HD_domain"/>
</dbReference>
<dbReference type="PANTHER" id="PTHR11373">
    <property type="entry name" value="DEOXYNUCLEOSIDE TRIPHOSPHATE TRIPHOSPHOHYDROLASE"/>
    <property type="match status" value="1"/>
</dbReference>
<dbReference type="PANTHER" id="PTHR11373:SF4">
    <property type="entry name" value="DEOXYNUCLEOSIDE TRIPHOSPHATE TRIPHOSPHOHYDROLASE SAMHD1"/>
    <property type="match status" value="1"/>
</dbReference>
<dbReference type="Pfam" id="PF01966">
    <property type="entry name" value="HD"/>
    <property type="match status" value="1"/>
</dbReference>
<dbReference type="SMART" id="SM00471">
    <property type="entry name" value="HDc"/>
    <property type="match status" value="1"/>
</dbReference>
<dbReference type="SUPFAM" id="SSF109604">
    <property type="entry name" value="HD-domain/PDEase-like"/>
    <property type="match status" value="1"/>
</dbReference>
<protein>
    <recommendedName>
        <fullName evidence="13">Metal-dependent phosphohydrolase cns2</fullName>
        <ecNumber evidence="2">3.1.3.-</ecNumber>
    </recommendedName>
    <alternativeName>
        <fullName evidence="13">Cordycepin biosynthesis cluster protein 2</fullName>
    </alternativeName>
</protein>